<evidence type="ECO:0000255" key="1">
    <source>
        <dbReference type="HAMAP-Rule" id="MF_00444"/>
    </source>
</evidence>
<keyword id="KW-0963">Cytoplasm</keyword>
<keyword id="KW-0378">Hydrolase</keyword>
<keyword id="KW-0645">Protease</keyword>
<keyword id="KW-0720">Serine protease</keyword>
<protein>
    <recommendedName>
        <fullName evidence="1">ATP-dependent Clp protease proteolytic subunit</fullName>
        <ecNumber evidence="1">3.4.21.92</ecNumber>
    </recommendedName>
    <alternativeName>
        <fullName evidence="1">Endopeptidase Clp</fullName>
    </alternativeName>
</protein>
<sequence>MSYVPIVVEPTSRGERAYDIYSRLLKERIIFVCSTVEDHMANLIVAQLLFLEAENPKKDIYMYINSPGGVVTAGLAIYDTMQYIKPKVATLCIGQACSMGSLLLCGGEKGMRYSLPHSRIMIHQPSGGYKGQATDIEIHAQETLKIKRLLNELYSKHTEQELKHIEKSMERDNFMSPEEAKKFGLVDNIMSSRDAMTLLAK</sequence>
<dbReference type="EC" id="3.4.21.92" evidence="1"/>
<dbReference type="EMBL" id="CP001227">
    <property type="protein sequence ID" value="ACR47385.1"/>
    <property type="molecule type" value="Genomic_DNA"/>
</dbReference>
<dbReference type="RefSeq" id="WP_012736637.1">
    <property type="nucleotide sequence ID" value="NC_012730.1"/>
</dbReference>
<dbReference type="SMR" id="C4K1D4"/>
<dbReference type="MEROPS" id="S14.001"/>
<dbReference type="KEGG" id="rpk:RPR_02940"/>
<dbReference type="HOGENOM" id="CLU_058707_3_3_5"/>
<dbReference type="Proteomes" id="UP000005015">
    <property type="component" value="Chromosome"/>
</dbReference>
<dbReference type="GO" id="GO:0005737">
    <property type="term" value="C:cytoplasm"/>
    <property type="evidence" value="ECO:0007669"/>
    <property type="project" value="UniProtKB-SubCell"/>
</dbReference>
<dbReference type="GO" id="GO:0009368">
    <property type="term" value="C:endopeptidase Clp complex"/>
    <property type="evidence" value="ECO:0007669"/>
    <property type="project" value="TreeGrafter"/>
</dbReference>
<dbReference type="GO" id="GO:0004176">
    <property type="term" value="F:ATP-dependent peptidase activity"/>
    <property type="evidence" value="ECO:0007669"/>
    <property type="project" value="InterPro"/>
</dbReference>
<dbReference type="GO" id="GO:0051117">
    <property type="term" value="F:ATPase binding"/>
    <property type="evidence" value="ECO:0007669"/>
    <property type="project" value="TreeGrafter"/>
</dbReference>
<dbReference type="GO" id="GO:0004252">
    <property type="term" value="F:serine-type endopeptidase activity"/>
    <property type="evidence" value="ECO:0007669"/>
    <property type="project" value="UniProtKB-UniRule"/>
</dbReference>
<dbReference type="GO" id="GO:0006515">
    <property type="term" value="P:protein quality control for misfolded or incompletely synthesized proteins"/>
    <property type="evidence" value="ECO:0007669"/>
    <property type="project" value="TreeGrafter"/>
</dbReference>
<dbReference type="CDD" id="cd07017">
    <property type="entry name" value="S14_ClpP_2"/>
    <property type="match status" value="1"/>
</dbReference>
<dbReference type="FunFam" id="3.90.226.10:FF:000001">
    <property type="entry name" value="ATP-dependent Clp protease proteolytic subunit"/>
    <property type="match status" value="1"/>
</dbReference>
<dbReference type="Gene3D" id="3.90.226.10">
    <property type="entry name" value="2-enoyl-CoA Hydratase, Chain A, domain 1"/>
    <property type="match status" value="1"/>
</dbReference>
<dbReference type="HAMAP" id="MF_00444">
    <property type="entry name" value="ClpP"/>
    <property type="match status" value="1"/>
</dbReference>
<dbReference type="InterPro" id="IPR001907">
    <property type="entry name" value="ClpP"/>
</dbReference>
<dbReference type="InterPro" id="IPR029045">
    <property type="entry name" value="ClpP/crotonase-like_dom_sf"/>
</dbReference>
<dbReference type="InterPro" id="IPR023562">
    <property type="entry name" value="ClpP/TepA"/>
</dbReference>
<dbReference type="InterPro" id="IPR033135">
    <property type="entry name" value="ClpP_His_AS"/>
</dbReference>
<dbReference type="InterPro" id="IPR018215">
    <property type="entry name" value="ClpP_Ser_AS"/>
</dbReference>
<dbReference type="NCBIfam" id="TIGR00493">
    <property type="entry name" value="clpP"/>
    <property type="match status" value="1"/>
</dbReference>
<dbReference type="NCBIfam" id="NF001368">
    <property type="entry name" value="PRK00277.1"/>
    <property type="match status" value="1"/>
</dbReference>
<dbReference type="NCBIfam" id="NF009205">
    <property type="entry name" value="PRK12553.1"/>
    <property type="match status" value="1"/>
</dbReference>
<dbReference type="PANTHER" id="PTHR10381">
    <property type="entry name" value="ATP-DEPENDENT CLP PROTEASE PROTEOLYTIC SUBUNIT"/>
    <property type="match status" value="1"/>
</dbReference>
<dbReference type="PANTHER" id="PTHR10381:SF70">
    <property type="entry name" value="ATP-DEPENDENT CLP PROTEASE PROTEOLYTIC SUBUNIT"/>
    <property type="match status" value="1"/>
</dbReference>
<dbReference type="Pfam" id="PF00574">
    <property type="entry name" value="CLP_protease"/>
    <property type="match status" value="1"/>
</dbReference>
<dbReference type="PRINTS" id="PR00127">
    <property type="entry name" value="CLPPROTEASEP"/>
</dbReference>
<dbReference type="SUPFAM" id="SSF52096">
    <property type="entry name" value="ClpP/crotonase"/>
    <property type="match status" value="1"/>
</dbReference>
<dbReference type="PROSITE" id="PS00382">
    <property type="entry name" value="CLP_PROTEASE_HIS"/>
    <property type="match status" value="1"/>
</dbReference>
<dbReference type="PROSITE" id="PS00381">
    <property type="entry name" value="CLP_PROTEASE_SER"/>
    <property type="match status" value="1"/>
</dbReference>
<proteinExistence type="inferred from homology"/>
<name>CLPP_RICPU</name>
<gene>
    <name evidence="1" type="primary">clpP</name>
    <name type="ordered locus">RPR_02940</name>
</gene>
<accession>C4K1D4</accession>
<reference key="1">
    <citation type="journal article" date="2009" name="PLoS ONE">
        <title>Genome sequence of the endosymbiont Rickettsia peacockii and comparison with virulent Rickettsia rickettsii: identification of virulence factors.</title>
        <authorList>
            <person name="Felsheim R.F."/>
            <person name="Kurtti T.J."/>
            <person name="Munderloh U.G."/>
        </authorList>
    </citation>
    <scope>NUCLEOTIDE SEQUENCE [LARGE SCALE GENOMIC DNA]</scope>
    <source>
        <strain>Rustic</strain>
    </source>
</reference>
<comment type="function">
    <text evidence="1">Cleaves peptides in various proteins in a process that requires ATP hydrolysis. Has a chymotrypsin-like activity. Plays a major role in the degradation of misfolded proteins.</text>
</comment>
<comment type="catalytic activity">
    <reaction evidence="1">
        <text>Hydrolysis of proteins to small peptides in the presence of ATP and magnesium. alpha-casein is the usual test substrate. In the absence of ATP, only oligopeptides shorter than five residues are hydrolyzed (such as succinyl-Leu-Tyr-|-NHMec, and Leu-Tyr-Leu-|-Tyr-Trp, in which cleavage of the -Tyr-|-Leu- and -Tyr-|-Trp bonds also occurs).</text>
        <dbReference type="EC" id="3.4.21.92"/>
    </reaction>
</comment>
<comment type="subunit">
    <text evidence="1">Fourteen ClpP subunits assemble into 2 heptameric rings which stack back to back to give a disk-like structure with a central cavity, resembling the structure of eukaryotic proteasomes.</text>
</comment>
<comment type="subcellular location">
    <subcellularLocation>
        <location evidence="1">Cytoplasm</location>
    </subcellularLocation>
</comment>
<comment type="similarity">
    <text evidence="1">Belongs to the peptidase S14 family.</text>
</comment>
<organism>
    <name type="scientific">Rickettsia peacockii (strain Rustic)</name>
    <dbReference type="NCBI Taxonomy" id="562019"/>
    <lineage>
        <taxon>Bacteria</taxon>
        <taxon>Pseudomonadati</taxon>
        <taxon>Pseudomonadota</taxon>
        <taxon>Alphaproteobacteria</taxon>
        <taxon>Rickettsiales</taxon>
        <taxon>Rickettsiaceae</taxon>
        <taxon>Rickettsieae</taxon>
        <taxon>Rickettsia</taxon>
        <taxon>spotted fever group</taxon>
    </lineage>
</organism>
<feature type="chain" id="PRO_1000206162" description="ATP-dependent Clp protease proteolytic subunit">
    <location>
        <begin position="1"/>
        <end position="201"/>
    </location>
</feature>
<feature type="active site" description="Nucleophile" evidence="1">
    <location>
        <position position="98"/>
    </location>
</feature>
<feature type="active site" evidence="1">
    <location>
        <position position="123"/>
    </location>
</feature>